<accession>P33484</accession>
<comment type="function">
    <text evidence="1">Capsid protein self-assembles to form an icosahedral capsid with a T=1 symmetry, about 22 nm in diameter, and consisting of 60 copies of two size variants of the capsid proteins, VP1 and VP2, which differ by the presence of an N-terminal extension in the minor protein VP1. The capsid encapsulates the genomic ssDNA. Capsid proteins are responsible for the attachment to host cell receptors. This attachment induces virion internalization predominantly through clathrin-dependent endocytosis. Binding to the host receptors also induces capsid rearrangements leading to surface exposure of VP1 N-terminus, specifically its phospholipase A2-like region and putative nuclear localization signal(s). VP1 N-terminus might serve as a lipolytic enzyme to breach the endosomal membrane during entry into host cell and might contribute to virus transport to the nucleus (By similarity).</text>
</comment>
<comment type="subcellular location">
    <subcellularLocation>
        <location evidence="1">Virion</location>
    </subcellularLocation>
    <subcellularLocation>
        <location evidence="4">Host nucleus</location>
    </subcellularLocation>
</comment>
<comment type="alternative products">
    <event type="alternative splicing"/>
    <isoform>
        <id>P33484-1</id>
        <name>VP1</name>
        <sequence type="displayed"/>
    </isoform>
    <isoform>
        <id>P33484-2</id>
        <name>VP2</name>
        <sequence type="described" ref="VSP_041142"/>
    </isoform>
</comment>
<comment type="domain">
    <text>The N-terminus of VP1 is sequestered within the mature capsid. It contains a phospholipase A2-like region and putative nuclear localization signals.</text>
</comment>
<comment type="miscellaneous">
    <text>The capsids of autonomous parvoviruses expose a proportion of VP2 N-terminus and part of that sequence can be cleaved of to form VP3.</text>
</comment>
<comment type="miscellaneous">
    <molecule>Isoform VP1</molecule>
    <text>Minor splicing isoform.</text>
</comment>
<comment type="miscellaneous">
    <molecule>Isoform VP2</molecule>
    <text evidence="4">Major splicing isoform produced by deletion of the initiating AUG for VP1 and downstream translation of VP2.</text>
</comment>
<comment type="similarity">
    <text evidence="4">Belongs to the parvoviridae capsid protein family.</text>
</comment>
<organismHost>
    <name type="scientific">Sus scrofa</name>
    <name type="common">Pig</name>
    <dbReference type="NCBI Taxonomy" id="9823"/>
</organismHost>
<organism>
    <name type="scientific">Porcine parvovirus (strain 90HS)</name>
    <name type="common">PPV</name>
    <dbReference type="NCBI Taxonomy" id="33725"/>
    <lineage>
        <taxon>Viruses</taxon>
        <taxon>Monodnaviria</taxon>
        <taxon>Shotokuvirae</taxon>
        <taxon>Cossaviricota</taxon>
        <taxon>Quintoviricetes</taxon>
        <taxon>Piccovirales</taxon>
        <taxon>Parvoviridae</taxon>
        <taxon>Parvovirinae</taxon>
        <taxon>Protoparvovirus</taxon>
        <taxon>Protoparvovirus ungulate1</taxon>
    </lineage>
</organism>
<protein>
    <recommendedName>
        <fullName>Capsid protein VP1</fullName>
    </recommendedName>
    <alternativeName>
        <fullName>Coat protein VP1</fullName>
    </alternativeName>
</protein>
<evidence type="ECO:0000250" key="1"/>
<evidence type="ECO:0000255" key="2"/>
<evidence type="ECO:0000256" key="3">
    <source>
        <dbReference type="SAM" id="MobiDB-lite"/>
    </source>
</evidence>
<evidence type="ECO:0000305" key="4"/>
<reference key="1">
    <citation type="journal article" date="1989" name="Virus Res.">
        <title>Nucleotide sequence of capsid protein gene of porcine parvovirus.</title>
        <authorList>
            <person name="Sakurai M."/>
            <person name="Nishimori T."/>
            <person name="Ushimi C."/>
            <person name="Nakajima H."/>
        </authorList>
    </citation>
    <scope>NUCLEOTIDE SEQUENCE</scope>
</reference>
<name>CAPSD_PAVP9</name>
<dbReference type="PIR" id="A60006">
    <property type="entry name" value="A60006"/>
</dbReference>
<dbReference type="SMR" id="P33484"/>
<dbReference type="GO" id="GO:0043657">
    <property type="term" value="C:host cell"/>
    <property type="evidence" value="ECO:0007669"/>
    <property type="project" value="GOC"/>
</dbReference>
<dbReference type="GO" id="GO:0042025">
    <property type="term" value="C:host cell nucleus"/>
    <property type="evidence" value="ECO:0007669"/>
    <property type="project" value="UniProtKB-SubCell"/>
</dbReference>
<dbReference type="GO" id="GO:0039615">
    <property type="term" value="C:T=1 icosahedral viral capsid"/>
    <property type="evidence" value="ECO:0007669"/>
    <property type="project" value="UniProtKB-KW"/>
</dbReference>
<dbReference type="GO" id="GO:0046872">
    <property type="term" value="F:metal ion binding"/>
    <property type="evidence" value="ECO:0007669"/>
    <property type="project" value="UniProtKB-KW"/>
</dbReference>
<dbReference type="GO" id="GO:0005198">
    <property type="term" value="F:structural molecule activity"/>
    <property type="evidence" value="ECO:0007669"/>
    <property type="project" value="InterPro"/>
</dbReference>
<dbReference type="GO" id="GO:0075512">
    <property type="term" value="P:clathrin-dependent endocytosis of virus by host cell"/>
    <property type="evidence" value="ECO:0007669"/>
    <property type="project" value="UniProtKB-KW"/>
</dbReference>
<dbReference type="GO" id="GO:0075521">
    <property type="term" value="P:microtubule-dependent intracellular transport of viral material towards nucleus"/>
    <property type="evidence" value="ECO:0007669"/>
    <property type="project" value="UniProtKB-KW"/>
</dbReference>
<dbReference type="GO" id="GO:0140267">
    <property type="term" value="P:symbiont entry into host cell via permeabilization of host membrane"/>
    <property type="evidence" value="ECO:0007669"/>
    <property type="project" value="UniProtKB-KW"/>
</dbReference>
<dbReference type="GO" id="GO:0075732">
    <property type="term" value="P:viral penetration into host nucleus"/>
    <property type="evidence" value="ECO:0007669"/>
    <property type="project" value="UniProtKB-KW"/>
</dbReference>
<dbReference type="GO" id="GO:0019062">
    <property type="term" value="P:virion attachment to host cell"/>
    <property type="evidence" value="ECO:0007669"/>
    <property type="project" value="UniProtKB-KW"/>
</dbReference>
<dbReference type="Gene3D" id="2.170.30.10">
    <property type="entry name" value="Parvovirus coat protein VP1/VP2"/>
    <property type="match status" value="1"/>
</dbReference>
<dbReference type="InterPro" id="IPR016184">
    <property type="entry name" value="Capsid/spike_ssDNA_virus"/>
</dbReference>
<dbReference type="InterPro" id="IPR001403">
    <property type="entry name" value="Parvovirus_coat"/>
</dbReference>
<dbReference type="InterPro" id="IPR013607">
    <property type="entry name" value="Phospholipase_A2-like"/>
</dbReference>
<dbReference type="InterPro" id="IPR036952">
    <property type="entry name" value="VP1/VP2"/>
</dbReference>
<dbReference type="Pfam" id="PF00740">
    <property type="entry name" value="Parvo_coat"/>
    <property type="match status" value="1"/>
</dbReference>
<dbReference type="Pfam" id="PF08398">
    <property type="entry name" value="Phospholip_A2_4"/>
    <property type="match status" value="1"/>
</dbReference>
<dbReference type="SUPFAM" id="SSF88645">
    <property type="entry name" value="ssDNA viruses"/>
    <property type="match status" value="1"/>
</dbReference>
<feature type="chain" id="PRO_0000039433" description="Capsid protein VP1">
    <location>
        <begin position="1"/>
        <end position="729"/>
    </location>
</feature>
<feature type="region of interest" description="Disordered" evidence="3">
    <location>
        <begin position="1"/>
        <end position="38"/>
    </location>
</feature>
<feature type="region of interest" description="Phospholipase A2-like" evidence="1">
    <location>
        <begin position="18"/>
        <end position="63"/>
    </location>
</feature>
<feature type="region of interest" description="Disordered" evidence="3">
    <location>
        <begin position="94"/>
        <end position="129"/>
    </location>
</feature>
<feature type="region of interest" description="Disordered" evidence="3">
    <location>
        <begin position="163"/>
        <end position="186"/>
    </location>
</feature>
<feature type="region of interest" description="Disordered" evidence="3">
    <location>
        <begin position="437"/>
        <end position="465"/>
    </location>
</feature>
<feature type="short sequence motif" description="Nuclear localization signal" evidence="2">
    <location>
        <begin position="4"/>
        <end position="12"/>
    </location>
</feature>
<feature type="compositionally biased region" description="Polar residues" evidence="3">
    <location>
        <begin position="24"/>
        <end position="34"/>
    </location>
</feature>
<feature type="compositionally biased region" description="Polar residues" evidence="3">
    <location>
        <begin position="98"/>
        <end position="107"/>
    </location>
</feature>
<feature type="compositionally biased region" description="Basic residues" evidence="3">
    <location>
        <begin position="112"/>
        <end position="128"/>
    </location>
</feature>
<feature type="compositionally biased region" description="Gly residues" evidence="3">
    <location>
        <begin position="173"/>
        <end position="186"/>
    </location>
</feature>
<feature type="binding site" evidence="1">
    <location>
        <position position="330"/>
    </location>
    <ligand>
        <name>Mg(2+)</name>
        <dbReference type="ChEBI" id="CHEBI:18420"/>
        <label>1</label>
    </ligand>
</feature>
<feature type="splice variant" id="VSP_041142" description="In isoform VP2." evidence="4">
    <location>
        <begin position="1"/>
        <end position="150"/>
    </location>
</feature>
<proteinExistence type="inferred from homology"/>
<keyword id="KW-0025">Alternative splicing</keyword>
<keyword id="KW-0167">Capsid protein</keyword>
<keyword id="KW-1165">Clathrin-mediated endocytosis of virus by host</keyword>
<keyword id="KW-1176">Cytoplasmic inwards viral transport</keyword>
<keyword id="KW-1048">Host nucleus</keyword>
<keyword id="KW-0945">Host-virus interaction</keyword>
<keyword id="KW-0460">Magnesium</keyword>
<keyword id="KW-0479">Metal-binding</keyword>
<keyword id="KW-1177">Microtubular inwards viral transport</keyword>
<keyword id="KW-1140">T=1 icosahedral capsid protein</keyword>
<keyword id="KW-1161">Viral attachment to host cell</keyword>
<keyword id="KW-1162">Viral penetration into host cytoplasm</keyword>
<keyword id="KW-1163">Viral penetration into host nucleus</keyword>
<keyword id="KW-1173">Viral penetration via permeabilization of host membrane</keyword>
<keyword id="KW-0946">Virion</keyword>
<keyword id="KW-1164">Virus endocytosis by host</keyword>
<keyword id="KW-1160">Virus entry into host cell</keyword>
<sequence>MAPPAKRARGLTLPGYKYLGPGNSLDQGEPTNPSDAAAKEHDEAYDKYIKSGKNPYFYFSAADEKFIKETEHAKDYGGKIGHYFFRAKRAFRPKLSETDSPTTSQQPEVRRSPRKHPGSKPPGKRPAPRHIFINLAKKKAKGTSNTNSNSMSENVEQHNPINAGTELSATGNESGGGGGGGGGRGAGGVGVSTGSFNNQTEFQYLGEGLVRITAHASRLIHLNMPEHETYKRIHVLNSESGVAGQMVQDDAHTQMVTPWSLIDANAWGVWFNPADWQLISNNMTEINLVSFEQEIFNVVLKTITESATSPPTKIYNNDLTASLMVALDTNNTLPYTPAAPRSETLGFYPWLPTKPTQYRYYLSCTRNLNPPTYTGQSQQITDSIQTGLHSDIMFYTIENAVPIHLLRTGDEFSTGIYHFDTKPLKLTHSWQTNRSLGLPPKLLTEPTTEGDQHPGTLPAANTRKGYHQTMNNSYTEATAIRPAQVGYNTPYMNFEYSNGGPFLTPIVPTADTQYNDDEPNGAIRFTMGYQHGQLTTSSQELERYTFNPQSKCGRAPKQQFNQQAPLNLENTNNGTLLPSDPIGGKPNMHFMNTLNTYGPLTALNNTAPVFPNGQIWDKELDTDLKPRLHVTAPFVCKNNPPGQLFVKIAPNLTDDFNADSPQQPRIITYSNFWWKGTLTFTAKMRSSNMWNPIQQHTTTAENIGNYIPTNIGGIKMFPEYSQLIPRKLY</sequence>